<keyword id="KW-0479">Metal-binding</keyword>
<keyword id="KW-0687">Ribonucleoprotein</keyword>
<keyword id="KW-0689">Ribosomal protein</keyword>
<keyword id="KW-0694">RNA-binding</keyword>
<keyword id="KW-0862">Zinc</keyword>
<keyword id="KW-0863">Zinc-finger</keyword>
<gene>
    <name evidence="1" type="primary">rpl37ae</name>
    <name type="ordered locus">DKAM_1322</name>
</gene>
<protein>
    <recommendedName>
        <fullName evidence="1">Large ribosomal subunit protein eL43</fullName>
    </recommendedName>
    <alternativeName>
        <fullName evidence="2">50S ribosomal protein L37Ae</fullName>
    </alternativeName>
    <alternativeName>
        <fullName evidence="1">Ribosomal protein L43e</fullName>
    </alternativeName>
</protein>
<proteinExistence type="inferred from homology"/>
<organism>
    <name type="scientific">Desulfurococcus amylolyticus (strain DSM 18924 / JCM 16383 / VKM B-2413 / 1221n)</name>
    <name type="common">Desulfurococcus kamchatkensis</name>
    <dbReference type="NCBI Taxonomy" id="490899"/>
    <lineage>
        <taxon>Archaea</taxon>
        <taxon>Thermoproteota</taxon>
        <taxon>Thermoprotei</taxon>
        <taxon>Desulfurococcales</taxon>
        <taxon>Desulfurococcaceae</taxon>
        <taxon>Desulfurococcus</taxon>
    </lineage>
</organism>
<reference key="1">
    <citation type="journal article" date="2009" name="J. Bacteriol.">
        <title>Complete genome sequence of the anaerobic, protein-degrading hyperthermophilic crenarchaeon Desulfurococcus kamchatkensis.</title>
        <authorList>
            <person name="Ravin N.V."/>
            <person name="Mardanov A.V."/>
            <person name="Beletsky A.V."/>
            <person name="Kublanov I.V."/>
            <person name="Kolganova T.V."/>
            <person name="Lebedinsky A.V."/>
            <person name="Chernyh N.A."/>
            <person name="Bonch-Osmolovskaya E.A."/>
            <person name="Skryabin K.G."/>
        </authorList>
    </citation>
    <scope>NUCLEOTIDE SEQUENCE [LARGE SCALE GENOMIC DNA]</scope>
    <source>
        <strain>DSM 18924 / JCM 16383 / VKM B-2413 / 1221n</strain>
    </source>
</reference>
<sequence length="86" mass="9614">MGKTKVVGIAGRYGTRYGSTLRKKIRDILEKRYSPHTCPFCGHKGKVYRLSTGVWACKKCGAKWAGGAYMPKTESAKLFSDIIIRE</sequence>
<comment type="cofactor">
    <cofactor evidence="1">
        <name>Zn(2+)</name>
        <dbReference type="ChEBI" id="CHEBI:29105"/>
    </cofactor>
    <text evidence="1">Binds 1 zinc ion per subunit.</text>
</comment>
<comment type="similarity">
    <text evidence="1">Belongs to the eukaryotic ribosomal protein eL43 family.</text>
</comment>
<dbReference type="EMBL" id="CP001140">
    <property type="protein sequence ID" value="ACL11648.1"/>
    <property type="molecule type" value="Genomic_DNA"/>
</dbReference>
<dbReference type="RefSeq" id="WP_012608989.1">
    <property type="nucleotide sequence ID" value="NC_011766.1"/>
</dbReference>
<dbReference type="SMR" id="B8D6B7"/>
<dbReference type="STRING" id="490899.DKAM_1322"/>
<dbReference type="GeneID" id="7171374"/>
<dbReference type="KEGG" id="dka:DKAM_1322"/>
<dbReference type="eggNOG" id="arCOG04208">
    <property type="taxonomic scope" value="Archaea"/>
</dbReference>
<dbReference type="HOGENOM" id="CLU_141199_2_0_2"/>
<dbReference type="Proteomes" id="UP000006903">
    <property type="component" value="Chromosome"/>
</dbReference>
<dbReference type="GO" id="GO:1990904">
    <property type="term" value="C:ribonucleoprotein complex"/>
    <property type="evidence" value="ECO:0007669"/>
    <property type="project" value="UniProtKB-KW"/>
</dbReference>
<dbReference type="GO" id="GO:0005840">
    <property type="term" value="C:ribosome"/>
    <property type="evidence" value="ECO:0007669"/>
    <property type="project" value="UniProtKB-KW"/>
</dbReference>
<dbReference type="GO" id="GO:0070180">
    <property type="term" value="F:large ribosomal subunit rRNA binding"/>
    <property type="evidence" value="ECO:0007669"/>
    <property type="project" value="UniProtKB-UniRule"/>
</dbReference>
<dbReference type="GO" id="GO:0003735">
    <property type="term" value="F:structural constituent of ribosome"/>
    <property type="evidence" value="ECO:0007669"/>
    <property type="project" value="InterPro"/>
</dbReference>
<dbReference type="GO" id="GO:0008270">
    <property type="term" value="F:zinc ion binding"/>
    <property type="evidence" value="ECO:0007669"/>
    <property type="project" value="UniProtKB-UniRule"/>
</dbReference>
<dbReference type="GO" id="GO:0006412">
    <property type="term" value="P:translation"/>
    <property type="evidence" value="ECO:0007669"/>
    <property type="project" value="UniProtKB-UniRule"/>
</dbReference>
<dbReference type="Gene3D" id="2.20.25.30">
    <property type="match status" value="1"/>
</dbReference>
<dbReference type="HAMAP" id="MF_00327">
    <property type="entry name" value="Ribosomal_eL43"/>
    <property type="match status" value="1"/>
</dbReference>
<dbReference type="InterPro" id="IPR011331">
    <property type="entry name" value="Ribosomal_eL37/eL43"/>
</dbReference>
<dbReference type="InterPro" id="IPR002674">
    <property type="entry name" value="Ribosomal_eL43"/>
</dbReference>
<dbReference type="InterPro" id="IPR050522">
    <property type="entry name" value="Ribosomal_protein_eL43"/>
</dbReference>
<dbReference type="InterPro" id="IPR011332">
    <property type="entry name" value="Ribosomal_zn-bd"/>
</dbReference>
<dbReference type="NCBIfam" id="NF003058">
    <property type="entry name" value="PRK03976.1"/>
    <property type="match status" value="1"/>
</dbReference>
<dbReference type="PANTHER" id="PTHR48129">
    <property type="entry name" value="60S RIBOSOMAL PROTEIN L37A"/>
    <property type="match status" value="1"/>
</dbReference>
<dbReference type="PANTHER" id="PTHR48129:SF1">
    <property type="entry name" value="LARGE RIBOSOMAL SUBUNIT PROTEIN EL43"/>
    <property type="match status" value="1"/>
</dbReference>
<dbReference type="Pfam" id="PF01780">
    <property type="entry name" value="Ribosomal_L37ae"/>
    <property type="match status" value="1"/>
</dbReference>
<dbReference type="SUPFAM" id="SSF57829">
    <property type="entry name" value="Zn-binding ribosomal proteins"/>
    <property type="match status" value="1"/>
</dbReference>
<evidence type="ECO:0000255" key="1">
    <source>
        <dbReference type="HAMAP-Rule" id="MF_00327"/>
    </source>
</evidence>
<evidence type="ECO:0000305" key="2"/>
<feature type="chain" id="PRO_1000194093" description="Large ribosomal subunit protein eL43">
    <location>
        <begin position="1"/>
        <end position="86"/>
    </location>
</feature>
<feature type="zinc finger region" description="C4-type" evidence="1">
    <location>
        <begin position="38"/>
        <end position="60"/>
    </location>
</feature>
<accession>B8D6B7</accession>
<name>RL37A_DESA1</name>